<keyword id="KW-0106">Calcium</keyword>
<keyword id="KW-0119">Carbohydrate metabolism</keyword>
<keyword id="KW-0961">Cell wall biogenesis/degradation</keyword>
<keyword id="KW-0325">Glycoprotein</keyword>
<keyword id="KW-0456">Lyase</keyword>
<keyword id="KW-0624">Polysaccharide degradation</keyword>
<keyword id="KW-0964">Secreted</keyword>
<keyword id="KW-0732">Signal</keyword>
<proteinExistence type="inferred from homology"/>
<feature type="signal peptide" evidence="2">
    <location>
        <begin position="1"/>
        <end position="17"/>
    </location>
</feature>
<feature type="chain" id="PRO_0000394588" description="Probable pectate lyase F">
    <location>
        <begin position="18"/>
        <end position="234"/>
    </location>
</feature>
<feature type="glycosylation site" description="N-linked (GlcNAc...) asparagine" evidence="2">
    <location>
        <position position="168"/>
    </location>
</feature>
<feature type="glycosylation site" description="N-linked (GlcNAc...) asparagine" evidence="2">
    <location>
        <position position="194"/>
    </location>
</feature>
<sequence>MFSRIALLPAFLPVALACLGYEGGVPTPTAHYSNSAVIEIAAGEVFDAGWAKYDRGSGACGGQTEGDWKDAVFYLHSGATLKNVIIGADQSEGVHCDGACTLEFVWFEDVCEDAISIKNDKEGEETWIIGGGAYHADDKVVQHNGCGTVNIINFYAEDYGKVYRSCGNCSSQCKRNVYVEGTTARDGGEVVGINQSFGDTATLVNVCTDADHPCVLYDGCEGDCEPSKVGYCSG</sequence>
<gene>
    <name type="primary">plyF</name>
    <name type="ORF">AFLA_070460</name>
</gene>
<dbReference type="EC" id="4.2.2.2"/>
<dbReference type="EMBL" id="EQ963479">
    <property type="protein sequence ID" value="EED50224.1"/>
    <property type="status" value="ALT_INIT"/>
    <property type="molecule type" value="Genomic_DNA"/>
</dbReference>
<dbReference type="RefSeq" id="XP_002380605.1">
    <property type="nucleotide sequence ID" value="XM_002380564.1"/>
</dbReference>
<dbReference type="SMR" id="B8NJZ7"/>
<dbReference type="STRING" id="332952.B8NJZ7"/>
<dbReference type="GlyCosmos" id="B8NJZ7">
    <property type="glycosylation" value="2 sites, No reported glycans"/>
</dbReference>
<dbReference type="EnsemblFungi" id="EED50224">
    <property type="protein sequence ID" value="EED50224"/>
    <property type="gene ID" value="AFLA_070460"/>
</dbReference>
<dbReference type="VEuPathDB" id="FungiDB:AFLA_008988"/>
<dbReference type="eggNOG" id="ENOG502QSM3">
    <property type="taxonomic scope" value="Eukaryota"/>
</dbReference>
<dbReference type="GO" id="GO:0005576">
    <property type="term" value="C:extracellular region"/>
    <property type="evidence" value="ECO:0007669"/>
    <property type="project" value="UniProtKB-SubCell"/>
</dbReference>
<dbReference type="GO" id="GO:0030570">
    <property type="term" value="F:pectate lyase activity"/>
    <property type="evidence" value="ECO:0007669"/>
    <property type="project" value="UniProtKB-EC"/>
</dbReference>
<dbReference type="GO" id="GO:0071555">
    <property type="term" value="P:cell wall organization"/>
    <property type="evidence" value="ECO:0007669"/>
    <property type="project" value="UniProtKB-KW"/>
</dbReference>
<dbReference type="GO" id="GO:0045490">
    <property type="term" value="P:pectin catabolic process"/>
    <property type="evidence" value="ECO:0007669"/>
    <property type="project" value="TreeGrafter"/>
</dbReference>
<dbReference type="Gene3D" id="2.160.20.10">
    <property type="entry name" value="Single-stranded right-handed beta-helix, Pectin lyase-like"/>
    <property type="match status" value="1"/>
</dbReference>
<dbReference type="InterPro" id="IPR004898">
    <property type="entry name" value="Pectate_lyase_PlyH/PlyE-like"/>
</dbReference>
<dbReference type="InterPro" id="IPR012334">
    <property type="entry name" value="Pectin_lyas_fold"/>
</dbReference>
<dbReference type="InterPro" id="IPR011050">
    <property type="entry name" value="Pectin_lyase_fold/virulence"/>
</dbReference>
<dbReference type="PANTHER" id="PTHR33407">
    <property type="entry name" value="PECTATE LYASE F-RELATED"/>
    <property type="match status" value="1"/>
</dbReference>
<dbReference type="PANTHER" id="PTHR33407:SF9">
    <property type="entry name" value="PECTATE LYASE F-RELATED"/>
    <property type="match status" value="1"/>
</dbReference>
<dbReference type="Pfam" id="PF03211">
    <property type="entry name" value="Pectate_lyase"/>
    <property type="match status" value="1"/>
</dbReference>
<dbReference type="SUPFAM" id="SSF51126">
    <property type="entry name" value="Pectin lyase-like"/>
    <property type="match status" value="1"/>
</dbReference>
<comment type="function">
    <text evidence="1">Pectinolytic enzyme consist of four classes of enzymes: pectin lyase, polygalacturonase, pectin methylesterase and rhamnogalacturonase. Among pectinolytic enzymes, pectin lyase is the most important in depolymerization of pectin, since it cleaves internal glycosidic bonds of highly methylated pectins. Favors pectate, the anion, over pectin, the methyl ester (By similarity).</text>
</comment>
<comment type="catalytic activity">
    <reaction>
        <text>Eliminative cleavage of (1-&gt;4)-alpha-D-galacturonan to give oligosaccharides with 4-deoxy-alpha-D-galact-4-enuronosyl groups at their non-reducing ends.</text>
        <dbReference type="EC" id="4.2.2.2"/>
    </reaction>
</comment>
<comment type="cofactor">
    <cofactor evidence="1">
        <name>Ca(2+)</name>
        <dbReference type="ChEBI" id="CHEBI:29108"/>
    </cofactor>
    <text evidence="1">Binds 1 Ca(2+) ion per subunit.</text>
</comment>
<comment type="subcellular location">
    <subcellularLocation>
        <location evidence="1">Secreted</location>
    </subcellularLocation>
</comment>
<comment type="similarity">
    <text evidence="3">Belongs to the polysaccharide lyase 3 family.</text>
</comment>
<comment type="sequence caution" evidence="3">
    <conflict type="erroneous initiation">
        <sequence resource="EMBL-CDS" id="EED50224"/>
    </conflict>
    <text>Extended N-terminus.</text>
</comment>
<protein>
    <recommendedName>
        <fullName>Probable pectate lyase F</fullName>
        <ecNumber>4.2.2.2</ecNumber>
    </recommendedName>
</protein>
<organism>
    <name type="scientific">Aspergillus flavus (strain ATCC 200026 / FGSC A1120 / IAM 13836 / NRRL 3357 / JCM 12722 / SRRC 167)</name>
    <dbReference type="NCBI Taxonomy" id="332952"/>
    <lineage>
        <taxon>Eukaryota</taxon>
        <taxon>Fungi</taxon>
        <taxon>Dikarya</taxon>
        <taxon>Ascomycota</taxon>
        <taxon>Pezizomycotina</taxon>
        <taxon>Eurotiomycetes</taxon>
        <taxon>Eurotiomycetidae</taxon>
        <taxon>Eurotiales</taxon>
        <taxon>Aspergillaceae</taxon>
        <taxon>Aspergillus</taxon>
        <taxon>Aspergillus subgen. Circumdati</taxon>
    </lineage>
</organism>
<name>PLYF_ASPFN</name>
<evidence type="ECO:0000250" key="1"/>
<evidence type="ECO:0000255" key="2"/>
<evidence type="ECO:0000305" key="3"/>
<accession>B8NJZ7</accession>
<reference key="1">
    <citation type="journal article" date="2015" name="Genome Announc.">
        <title>Genome sequence of Aspergillus flavus NRRL 3357, a strain that causes aflatoxin contamination of food and feed.</title>
        <authorList>
            <person name="Nierman W.C."/>
            <person name="Yu J."/>
            <person name="Fedorova-Abrams N.D."/>
            <person name="Losada L."/>
            <person name="Cleveland T.E."/>
            <person name="Bhatnagar D."/>
            <person name="Bennett J.W."/>
            <person name="Dean R."/>
            <person name="Payne G.A."/>
        </authorList>
    </citation>
    <scope>NUCLEOTIDE SEQUENCE [LARGE SCALE GENOMIC DNA]</scope>
    <source>
        <strain>ATCC 200026 / FGSC A1120 / IAM 13836 / NRRL 3357 / JCM 12722 / SRRC 167</strain>
    </source>
</reference>